<organism>
    <name type="scientific">Leptospira biflexa serovar Patoc (strain Patoc 1 / ATCC 23582 / Paris)</name>
    <dbReference type="NCBI Taxonomy" id="456481"/>
    <lineage>
        <taxon>Bacteria</taxon>
        <taxon>Pseudomonadati</taxon>
        <taxon>Spirochaetota</taxon>
        <taxon>Spirochaetia</taxon>
        <taxon>Leptospirales</taxon>
        <taxon>Leptospiraceae</taxon>
        <taxon>Leptospira</taxon>
    </lineage>
</organism>
<gene>
    <name evidence="1" type="primary">rplX</name>
    <name type="ordered locus">LEPBI_I1953</name>
</gene>
<dbReference type="EMBL" id="CP000786">
    <property type="protein sequence ID" value="ABZ98056.1"/>
    <property type="molecule type" value="Genomic_DNA"/>
</dbReference>
<dbReference type="RefSeq" id="WP_012388931.1">
    <property type="nucleotide sequence ID" value="NC_010602.1"/>
</dbReference>
<dbReference type="SMR" id="B0SSG6"/>
<dbReference type="STRING" id="456481.LEPBI_I1953"/>
<dbReference type="GeneID" id="93343066"/>
<dbReference type="KEGG" id="lbi:LEPBI_I1953"/>
<dbReference type="HOGENOM" id="CLU_093315_2_2_12"/>
<dbReference type="OrthoDB" id="9807419at2"/>
<dbReference type="BioCyc" id="LBIF456481:LEPBI_RS09650-MONOMER"/>
<dbReference type="Proteomes" id="UP000001847">
    <property type="component" value="Chromosome I"/>
</dbReference>
<dbReference type="GO" id="GO:1990904">
    <property type="term" value="C:ribonucleoprotein complex"/>
    <property type="evidence" value="ECO:0007669"/>
    <property type="project" value="UniProtKB-KW"/>
</dbReference>
<dbReference type="GO" id="GO:0005840">
    <property type="term" value="C:ribosome"/>
    <property type="evidence" value="ECO:0007669"/>
    <property type="project" value="UniProtKB-KW"/>
</dbReference>
<dbReference type="GO" id="GO:0019843">
    <property type="term" value="F:rRNA binding"/>
    <property type="evidence" value="ECO:0007669"/>
    <property type="project" value="UniProtKB-UniRule"/>
</dbReference>
<dbReference type="GO" id="GO:0003735">
    <property type="term" value="F:structural constituent of ribosome"/>
    <property type="evidence" value="ECO:0007669"/>
    <property type="project" value="InterPro"/>
</dbReference>
<dbReference type="GO" id="GO:0006412">
    <property type="term" value="P:translation"/>
    <property type="evidence" value="ECO:0007669"/>
    <property type="project" value="UniProtKB-UniRule"/>
</dbReference>
<dbReference type="CDD" id="cd06089">
    <property type="entry name" value="KOW_RPL26"/>
    <property type="match status" value="1"/>
</dbReference>
<dbReference type="Gene3D" id="2.30.30.30">
    <property type="match status" value="1"/>
</dbReference>
<dbReference type="HAMAP" id="MF_01326_B">
    <property type="entry name" value="Ribosomal_uL24_B"/>
    <property type="match status" value="1"/>
</dbReference>
<dbReference type="InterPro" id="IPR005824">
    <property type="entry name" value="KOW"/>
</dbReference>
<dbReference type="InterPro" id="IPR014722">
    <property type="entry name" value="Rib_uL2_dom2"/>
</dbReference>
<dbReference type="InterPro" id="IPR003256">
    <property type="entry name" value="Ribosomal_uL24"/>
</dbReference>
<dbReference type="InterPro" id="IPR005825">
    <property type="entry name" value="Ribosomal_uL24_CS"/>
</dbReference>
<dbReference type="InterPro" id="IPR041988">
    <property type="entry name" value="Ribosomal_uL24_KOW"/>
</dbReference>
<dbReference type="InterPro" id="IPR008991">
    <property type="entry name" value="Translation_prot_SH3-like_sf"/>
</dbReference>
<dbReference type="NCBIfam" id="TIGR01079">
    <property type="entry name" value="rplX_bact"/>
    <property type="match status" value="1"/>
</dbReference>
<dbReference type="PANTHER" id="PTHR12903">
    <property type="entry name" value="MITOCHONDRIAL RIBOSOMAL PROTEIN L24"/>
    <property type="match status" value="1"/>
</dbReference>
<dbReference type="Pfam" id="PF00467">
    <property type="entry name" value="KOW"/>
    <property type="match status" value="1"/>
</dbReference>
<dbReference type="Pfam" id="PF17136">
    <property type="entry name" value="ribosomal_L24"/>
    <property type="match status" value="1"/>
</dbReference>
<dbReference type="SMART" id="SM00739">
    <property type="entry name" value="KOW"/>
    <property type="match status" value="1"/>
</dbReference>
<dbReference type="SUPFAM" id="SSF50104">
    <property type="entry name" value="Translation proteins SH3-like domain"/>
    <property type="match status" value="1"/>
</dbReference>
<dbReference type="PROSITE" id="PS01108">
    <property type="entry name" value="RIBOSOMAL_L24"/>
    <property type="match status" value="1"/>
</dbReference>
<keyword id="KW-1185">Reference proteome</keyword>
<keyword id="KW-0687">Ribonucleoprotein</keyword>
<keyword id="KW-0689">Ribosomal protein</keyword>
<keyword id="KW-0694">RNA-binding</keyword>
<keyword id="KW-0699">rRNA-binding</keyword>
<protein>
    <recommendedName>
        <fullName evidence="1">Large ribosomal subunit protein uL24</fullName>
    </recommendedName>
    <alternativeName>
        <fullName evidence="2">50S ribosomal protein L24</fullName>
    </alternativeName>
</protein>
<accession>B0SSG6</accession>
<name>RL24_LEPBP</name>
<proteinExistence type="inferred from homology"/>
<sequence>MATKLAYRGSEPTKFKKTKIKKDDEVLVISGKEKGKKGKVLAVDKRKDRVYIEGVNKRKRFVRPTQENPGGGAIEIEFPIHISNVMFHDAKAENKAKPKKKIKAVRLGFAKKDGKSVRVTRPEGKEV</sequence>
<comment type="function">
    <text evidence="1">One of two assembly initiator proteins, it binds directly to the 5'-end of the 23S rRNA, where it nucleates assembly of the 50S subunit.</text>
</comment>
<comment type="function">
    <text evidence="1">One of the proteins that surrounds the polypeptide exit tunnel on the outside of the subunit.</text>
</comment>
<comment type="subunit">
    <text evidence="1">Part of the 50S ribosomal subunit.</text>
</comment>
<comment type="similarity">
    <text evidence="1">Belongs to the universal ribosomal protein uL24 family.</text>
</comment>
<feature type="chain" id="PRO_0000355692" description="Large ribosomal subunit protein uL24">
    <location>
        <begin position="1"/>
        <end position="127"/>
    </location>
</feature>
<reference key="1">
    <citation type="journal article" date="2008" name="PLoS ONE">
        <title>Genome sequence of the saprophyte Leptospira biflexa provides insights into the evolution of Leptospira and the pathogenesis of leptospirosis.</title>
        <authorList>
            <person name="Picardeau M."/>
            <person name="Bulach D.M."/>
            <person name="Bouchier C."/>
            <person name="Zuerner R.L."/>
            <person name="Zidane N."/>
            <person name="Wilson P.J."/>
            <person name="Creno S."/>
            <person name="Kuczek E.S."/>
            <person name="Bommezzadri S."/>
            <person name="Davis J.C."/>
            <person name="McGrath A."/>
            <person name="Johnson M.J."/>
            <person name="Boursaux-Eude C."/>
            <person name="Seemann T."/>
            <person name="Rouy Z."/>
            <person name="Coppel R.L."/>
            <person name="Rood J.I."/>
            <person name="Lajus A."/>
            <person name="Davies J.K."/>
            <person name="Medigue C."/>
            <person name="Adler B."/>
        </authorList>
    </citation>
    <scope>NUCLEOTIDE SEQUENCE [LARGE SCALE GENOMIC DNA]</scope>
    <source>
        <strain>Patoc 1 / ATCC 23582 / Paris</strain>
    </source>
</reference>
<evidence type="ECO:0000255" key="1">
    <source>
        <dbReference type="HAMAP-Rule" id="MF_01326"/>
    </source>
</evidence>
<evidence type="ECO:0000305" key="2"/>